<accession>B2RZJ7</accession>
<dbReference type="EMBL" id="CP000048">
    <property type="protein sequence ID" value="AAX16653.1"/>
    <property type="molecule type" value="Genomic_DNA"/>
</dbReference>
<dbReference type="RefSeq" id="WP_012421910.1">
    <property type="nucleotide sequence ID" value="NZ_CP073136.1"/>
</dbReference>
<dbReference type="SMR" id="B2RZJ7"/>
<dbReference type="KEGG" id="bhr:BH0131"/>
<dbReference type="HOGENOM" id="CLU_040469_3_2_12"/>
<dbReference type="Proteomes" id="UP000008834">
    <property type="component" value="Chromosome"/>
</dbReference>
<dbReference type="GO" id="GO:0005829">
    <property type="term" value="C:cytosol"/>
    <property type="evidence" value="ECO:0007669"/>
    <property type="project" value="TreeGrafter"/>
</dbReference>
<dbReference type="GO" id="GO:0005524">
    <property type="term" value="F:ATP binding"/>
    <property type="evidence" value="ECO:0007669"/>
    <property type="project" value="UniProtKB-UniRule"/>
</dbReference>
<dbReference type="GO" id="GO:0016887">
    <property type="term" value="F:ATP hydrolysis activity"/>
    <property type="evidence" value="ECO:0007669"/>
    <property type="project" value="InterPro"/>
</dbReference>
<dbReference type="GO" id="GO:0140664">
    <property type="term" value="F:ATP-dependent DNA damage sensor activity"/>
    <property type="evidence" value="ECO:0007669"/>
    <property type="project" value="InterPro"/>
</dbReference>
<dbReference type="GO" id="GO:0003684">
    <property type="term" value="F:damaged DNA binding"/>
    <property type="evidence" value="ECO:0007669"/>
    <property type="project" value="UniProtKB-UniRule"/>
</dbReference>
<dbReference type="GO" id="GO:0003697">
    <property type="term" value="F:single-stranded DNA binding"/>
    <property type="evidence" value="ECO:0007669"/>
    <property type="project" value="UniProtKB-UniRule"/>
</dbReference>
<dbReference type="GO" id="GO:0006310">
    <property type="term" value="P:DNA recombination"/>
    <property type="evidence" value="ECO:0007669"/>
    <property type="project" value="UniProtKB-UniRule"/>
</dbReference>
<dbReference type="GO" id="GO:0006281">
    <property type="term" value="P:DNA repair"/>
    <property type="evidence" value="ECO:0007669"/>
    <property type="project" value="UniProtKB-UniRule"/>
</dbReference>
<dbReference type="GO" id="GO:0009432">
    <property type="term" value="P:SOS response"/>
    <property type="evidence" value="ECO:0007669"/>
    <property type="project" value="UniProtKB-UniRule"/>
</dbReference>
<dbReference type="CDD" id="cd00983">
    <property type="entry name" value="RecA"/>
    <property type="match status" value="1"/>
</dbReference>
<dbReference type="FunFam" id="3.40.50.300:FF:000087">
    <property type="entry name" value="Recombinase RecA"/>
    <property type="match status" value="1"/>
</dbReference>
<dbReference type="Gene3D" id="3.40.50.300">
    <property type="entry name" value="P-loop containing nucleotide triphosphate hydrolases"/>
    <property type="match status" value="1"/>
</dbReference>
<dbReference type="HAMAP" id="MF_00268">
    <property type="entry name" value="RecA"/>
    <property type="match status" value="1"/>
</dbReference>
<dbReference type="InterPro" id="IPR003593">
    <property type="entry name" value="AAA+_ATPase"/>
</dbReference>
<dbReference type="InterPro" id="IPR013765">
    <property type="entry name" value="DNA_recomb/repair_RecA"/>
</dbReference>
<dbReference type="InterPro" id="IPR020584">
    <property type="entry name" value="DNA_recomb/repair_RecA_CS"/>
</dbReference>
<dbReference type="InterPro" id="IPR027417">
    <property type="entry name" value="P-loop_NTPase"/>
</dbReference>
<dbReference type="InterPro" id="IPR049261">
    <property type="entry name" value="RecA-like_C"/>
</dbReference>
<dbReference type="InterPro" id="IPR049428">
    <property type="entry name" value="RecA-like_N"/>
</dbReference>
<dbReference type="InterPro" id="IPR020588">
    <property type="entry name" value="RecA_ATP-bd"/>
</dbReference>
<dbReference type="InterPro" id="IPR023400">
    <property type="entry name" value="RecA_C_sf"/>
</dbReference>
<dbReference type="InterPro" id="IPR020587">
    <property type="entry name" value="RecA_monomer-monomer_interface"/>
</dbReference>
<dbReference type="NCBIfam" id="TIGR02012">
    <property type="entry name" value="tigrfam_recA"/>
    <property type="match status" value="1"/>
</dbReference>
<dbReference type="PANTHER" id="PTHR45900:SF1">
    <property type="entry name" value="MITOCHONDRIAL DNA REPAIR PROTEIN RECA HOMOLOG-RELATED"/>
    <property type="match status" value="1"/>
</dbReference>
<dbReference type="PANTHER" id="PTHR45900">
    <property type="entry name" value="RECA"/>
    <property type="match status" value="1"/>
</dbReference>
<dbReference type="Pfam" id="PF00154">
    <property type="entry name" value="RecA"/>
    <property type="match status" value="1"/>
</dbReference>
<dbReference type="Pfam" id="PF21096">
    <property type="entry name" value="RecA_C"/>
    <property type="match status" value="1"/>
</dbReference>
<dbReference type="PRINTS" id="PR00142">
    <property type="entry name" value="RECA"/>
</dbReference>
<dbReference type="SMART" id="SM00382">
    <property type="entry name" value="AAA"/>
    <property type="match status" value="1"/>
</dbReference>
<dbReference type="SUPFAM" id="SSF52540">
    <property type="entry name" value="P-loop containing nucleoside triphosphate hydrolases"/>
    <property type="match status" value="1"/>
</dbReference>
<dbReference type="SUPFAM" id="SSF54752">
    <property type="entry name" value="RecA protein, C-terminal domain"/>
    <property type="match status" value="1"/>
</dbReference>
<dbReference type="PROSITE" id="PS00321">
    <property type="entry name" value="RECA_1"/>
    <property type="match status" value="1"/>
</dbReference>
<dbReference type="PROSITE" id="PS50162">
    <property type="entry name" value="RECA_2"/>
    <property type="match status" value="1"/>
</dbReference>
<dbReference type="PROSITE" id="PS50163">
    <property type="entry name" value="RECA_3"/>
    <property type="match status" value="1"/>
</dbReference>
<evidence type="ECO:0000255" key="1">
    <source>
        <dbReference type="HAMAP-Rule" id="MF_00268"/>
    </source>
</evidence>
<sequence>MSKLKDNPDNSLNDRLNREKAIELARVQIEKDFGKGSLIKMGESPVGKGIESISSGSILLDEAIGVGGYPRGRIIEIFGPESSGKTTLTLQAIAEVQKNGGIAAFIDAEHALDPAYAKALGVNIDELWISQPDTGEQALEIAEYLIRSGGVDLIVVDSVAALTPQAEIDGEMGDSQIGLQARLMSKALRKITGILSKSNTCIMFINQLRMKIGVMFGNPETTTGGNALKFYSSLRLEVRKIDQVTGSSADDIVGNKIRIKVVKNKVAPPFRKVELVIYFGKGISREASILDASVKYNLIQKTGSWYSMGDDKLGQGREHAVSYLVKEKEVTDELESKLRKIIFEDPNQDFLEVGTT</sequence>
<reference key="1">
    <citation type="submission" date="2004-12" db="EMBL/GenBank/DDBJ databases">
        <title>The genome sequence of Borrelia hermsii and Borrelia turicatae: comparative analysis of two agents of endemic N. America relapsing fever.</title>
        <authorList>
            <person name="Porcella S.F."/>
            <person name="Raffel S.J."/>
            <person name="Schrumpf M.E."/>
            <person name="Montgomery B."/>
            <person name="Smith T."/>
            <person name="Schwan T.G."/>
        </authorList>
    </citation>
    <scope>NUCLEOTIDE SEQUENCE [LARGE SCALE GENOMIC DNA]</scope>
    <source>
        <strain>HS1 / DAH</strain>
    </source>
</reference>
<comment type="function">
    <text evidence="1">Can catalyze the hydrolysis of ATP in the presence of single-stranded DNA, the ATP-dependent uptake of single-stranded DNA by duplex DNA, and the ATP-dependent hybridization of homologous single-stranded DNAs. It interacts with LexA causing its activation and leading to its autocatalytic cleavage.</text>
</comment>
<comment type="subcellular location">
    <subcellularLocation>
        <location evidence="1">Cytoplasm</location>
    </subcellularLocation>
</comment>
<comment type="similarity">
    <text evidence="1">Belongs to the RecA family.</text>
</comment>
<protein>
    <recommendedName>
        <fullName evidence="1">Protein RecA</fullName>
    </recommendedName>
    <alternativeName>
        <fullName evidence="1">Recombinase A</fullName>
    </alternativeName>
</protein>
<feature type="chain" id="PRO_1000114315" description="Protein RecA">
    <location>
        <begin position="1"/>
        <end position="356"/>
    </location>
</feature>
<feature type="binding site" evidence="1">
    <location>
        <begin position="79"/>
        <end position="86"/>
    </location>
    <ligand>
        <name>ATP</name>
        <dbReference type="ChEBI" id="CHEBI:30616"/>
    </ligand>
</feature>
<name>RECA_BORHD</name>
<proteinExistence type="inferred from homology"/>
<organism>
    <name type="scientific">Borrelia hermsii (strain HS1 / DAH)</name>
    <dbReference type="NCBI Taxonomy" id="314723"/>
    <lineage>
        <taxon>Bacteria</taxon>
        <taxon>Pseudomonadati</taxon>
        <taxon>Spirochaetota</taxon>
        <taxon>Spirochaetia</taxon>
        <taxon>Spirochaetales</taxon>
        <taxon>Borreliaceae</taxon>
        <taxon>Borrelia</taxon>
    </lineage>
</organism>
<keyword id="KW-0067">ATP-binding</keyword>
<keyword id="KW-0963">Cytoplasm</keyword>
<keyword id="KW-0227">DNA damage</keyword>
<keyword id="KW-0233">DNA recombination</keyword>
<keyword id="KW-0234">DNA repair</keyword>
<keyword id="KW-0238">DNA-binding</keyword>
<keyword id="KW-0547">Nucleotide-binding</keyword>
<keyword id="KW-0742">SOS response</keyword>
<gene>
    <name evidence="1" type="primary">recA</name>
    <name type="ordered locus">BH0131</name>
</gene>